<organism>
    <name type="scientific">Shigella dysenteriae serotype 1 (strain Sd197)</name>
    <dbReference type="NCBI Taxonomy" id="300267"/>
    <lineage>
        <taxon>Bacteria</taxon>
        <taxon>Pseudomonadati</taxon>
        <taxon>Pseudomonadota</taxon>
        <taxon>Gammaproteobacteria</taxon>
        <taxon>Enterobacterales</taxon>
        <taxon>Enterobacteriaceae</taxon>
        <taxon>Shigella</taxon>
    </lineage>
</organism>
<name>YGIB_SHIDS</name>
<reference key="1">
    <citation type="journal article" date="2005" name="Nucleic Acids Res.">
        <title>Genome dynamics and diversity of Shigella species, the etiologic agents of bacillary dysentery.</title>
        <authorList>
            <person name="Yang F."/>
            <person name="Yang J."/>
            <person name="Zhang X."/>
            <person name="Chen L."/>
            <person name="Jiang Y."/>
            <person name="Yan Y."/>
            <person name="Tang X."/>
            <person name="Wang J."/>
            <person name="Xiong Z."/>
            <person name="Dong J."/>
            <person name="Xue Y."/>
            <person name="Zhu Y."/>
            <person name="Xu X."/>
            <person name="Sun L."/>
            <person name="Chen S."/>
            <person name="Nie H."/>
            <person name="Peng J."/>
            <person name="Xu J."/>
            <person name="Wang Y."/>
            <person name="Yuan Z."/>
            <person name="Wen Y."/>
            <person name="Yao Z."/>
            <person name="Shen Y."/>
            <person name="Qiang B."/>
            <person name="Hou Y."/>
            <person name="Yu J."/>
            <person name="Jin Q."/>
        </authorList>
    </citation>
    <scope>NUCLEOTIDE SEQUENCE [LARGE SCALE GENOMIC DNA]</scope>
    <source>
        <strain>Sd197</strain>
    </source>
</reference>
<gene>
    <name evidence="1" type="primary">ygiB</name>
    <name type="ordered locus">SDY_3203</name>
</gene>
<accession>Q32BU3</accession>
<protein>
    <recommendedName>
        <fullName evidence="1">UPF0441 protein YgiB</fullName>
    </recommendedName>
</protein>
<proteinExistence type="inferred from homology"/>
<evidence type="ECO:0000255" key="1">
    <source>
        <dbReference type="HAMAP-Rule" id="MF_01188"/>
    </source>
</evidence>
<evidence type="ECO:0000256" key="2">
    <source>
        <dbReference type="SAM" id="MobiDB-lite"/>
    </source>
</evidence>
<evidence type="ECO:0000305" key="3"/>
<dbReference type="EMBL" id="CP000034">
    <property type="protein sequence ID" value="ABB63212.1"/>
    <property type="status" value="ALT_INIT"/>
    <property type="molecule type" value="Genomic_DNA"/>
</dbReference>
<dbReference type="RefSeq" id="WP_000831535.1">
    <property type="nucleotide sequence ID" value="NC_007606.1"/>
</dbReference>
<dbReference type="RefSeq" id="YP_404703.2">
    <property type="nucleotide sequence ID" value="NC_007606.1"/>
</dbReference>
<dbReference type="SMR" id="Q32BU3"/>
<dbReference type="STRING" id="300267.SDY_3203"/>
<dbReference type="EnsemblBacteria" id="ABB63212">
    <property type="protein sequence ID" value="ABB63212"/>
    <property type="gene ID" value="SDY_3203"/>
</dbReference>
<dbReference type="KEGG" id="sdy:SDY_3203"/>
<dbReference type="PATRIC" id="fig|300267.13.peg.3828"/>
<dbReference type="HOGENOM" id="CLU_095624_0_0_6"/>
<dbReference type="Proteomes" id="UP000002716">
    <property type="component" value="Chromosome"/>
</dbReference>
<dbReference type="HAMAP" id="MF_01188">
    <property type="entry name" value="UPF0441"/>
    <property type="match status" value="1"/>
</dbReference>
<dbReference type="InterPro" id="IPR009576">
    <property type="entry name" value="Biofilm_formation_YgiB"/>
</dbReference>
<dbReference type="NCBIfam" id="NF008655">
    <property type="entry name" value="PRK11653.1"/>
    <property type="match status" value="1"/>
</dbReference>
<dbReference type="Pfam" id="PF06693">
    <property type="entry name" value="DUF1190"/>
    <property type="match status" value="1"/>
</dbReference>
<comment type="similarity">
    <text evidence="1">Belongs to the UPF0441 family.</text>
</comment>
<comment type="sequence caution" evidence="3">
    <conflict type="erroneous initiation">
        <sequence resource="EMBL-CDS" id="ABB63212"/>
    </conflict>
</comment>
<keyword id="KW-1185">Reference proteome</keyword>
<sequence>MKRTKSIRHASFRKNWSARHLTPVALAVATVFMLAGCEKSDETVSLYQNADDCSAANPGKSAECTTAYNNALKEAERTAPKYATREDCVAEFGEGLCQQAPAKAGMAPENQAQAQQSSGSFWMPLMAGYMMGRLMGGGAGFAQQPLFSSKNPASPAYGKYTDATGKNYGAAQPGRTMTVPKTAMAPKPATTTTVTRGGFGESVAKQSTMQRSATGTSSRSMGG</sequence>
<feature type="chain" id="PRO_0000293644" description="UPF0441 protein YgiB">
    <location>
        <begin position="1"/>
        <end position="223"/>
    </location>
</feature>
<feature type="region of interest" description="Disordered" evidence="2">
    <location>
        <begin position="178"/>
        <end position="223"/>
    </location>
</feature>
<feature type="compositionally biased region" description="Low complexity" evidence="2">
    <location>
        <begin position="178"/>
        <end position="195"/>
    </location>
</feature>
<feature type="compositionally biased region" description="Polar residues" evidence="2">
    <location>
        <begin position="204"/>
        <end position="223"/>
    </location>
</feature>